<dbReference type="EMBL" id="AM181176">
    <property type="protein sequence ID" value="CAY52850.1"/>
    <property type="molecule type" value="Genomic_DNA"/>
</dbReference>
<dbReference type="RefSeq" id="WP_015886176.1">
    <property type="nucleotide sequence ID" value="NC_012660.1"/>
</dbReference>
<dbReference type="SMR" id="C3K328"/>
<dbReference type="STRING" id="294.SRM1_05239"/>
<dbReference type="GeneID" id="93467210"/>
<dbReference type="eggNOG" id="COG2967">
    <property type="taxonomic scope" value="Bacteria"/>
</dbReference>
<dbReference type="HOGENOM" id="CLU_128074_0_0_6"/>
<dbReference type="OrthoDB" id="9795226at2"/>
<dbReference type="GO" id="GO:0070987">
    <property type="term" value="P:error-free translesion synthesis"/>
    <property type="evidence" value="ECO:0007669"/>
    <property type="project" value="TreeGrafter"/>
</dbReference>
<dbReference type="Gene3D" id="2.60.40.1470">
    <property type="entry name" value="ApaG domain"/>
    <property type="match status" value="1"/>
</dbReference>
<dbReference type="HAMAP" id="MF_00791">
    <property type="entry name" value="ApaG"/>
    <property type="match status" value="1"/>
</dbReference>
<dbReference type="InterPro" id="IPR007474">
    <property type="entry name" value="ApaG_domain"/>
</dbReference>
<dbReference type="InterPro" id="IPR036767">
    <property type="entry name" value="ApaG_sf"/>
</dbReference>
<dbReference type="InterPro" id="IPR023065">
    <property type="entry name" value="Uncharacterised_ApaG"/>
</dbReference>
<dbReference type="NCBIfam" id="NF003967">
    <property type="entry name" value="PRK05461.1"/>
    <property type="match status" value="1"/>
</dbReference>
<dbReference type="PANTHER" id="PTHR14289">
    <property type="entry name" value="F-BOX ONLY PROTEIN 3"/>
    <property type="match status" value="1"/>
</dbReference>
<dbReference type="PANTHER" id="PTHR14289:SF16">
    <property type="entry name" value="POLYMERASE DELTA-INTERACTING PROTEIN 2"/>
    <property type="match status" value="1"/>
</dbReference>
<dbReference type="Pfam" id="PF04379">
    <property type="entry name" value="DUF525"/>
    <property type="match status" value="1"/>
</dbReference>
<dbReference type="SUPFAM" id="SSF110069">
    <property type="entry name" value="ApaG-like"/>
    <property type="match status" value="1"/>
</dbReference>
<dbReference type="PROSITE" id="PS51087">
    <property type="entry name" value="APAG"/>
    <property type="match status" value="1"/>
</dbReference>
<feature type="chain" id="PRO_1000212961" description="Protein ApaG">
    <location>
        <begin position="1"/>
        <end position="126"/>
    </location>
</feature>
<feature type="domain" description="ApaG" evidence="1">
    <location>
        <begin position="2"/>
        <end position="126"/>
    </location>
</feature>
<sequence>MSDPRYQIDVSVVTRFLADQSQPEQNRFAFAYTITVKNNGLVPAKLLSRHWVITDGDGQVEEVRGAGVVGQQPLIDIGASHTYSSGTVMTSKVGTMQGSYQMKATDGKLFDAIIAPFRLAVPGALH</sequence>
<proteinExistence type="inferred from homology"/>
<gene>
    <name evidence="1" type="primary">apaG</name>
    <name type="ordered locus">PFLU_5579</name>
</gene>
<organism>
    <name type="scientific">Pseudomonas fluorescens (strain SBW25)</name>
    <dbReference type="NCBI Taxonomy" id="216595"/>
    <lineage>
        <taxon>Bacteria</taxon>
        <taxon>Pseudomonadati</taxon>
        <taxon>Pseudomonadota</taxon>
        <taxon>Gammaproteobacteria</taxon>
        <taxon>Pseudomonadales</taxon>
        <taxon>Pseudomonadaceae</taxon>
        <taxon>Pseudomonas</taxon>
    </lineage>
</organism>
<reference key="1">
    <citation type="journal article" date="2009" name="Genome Biol.">
        <title>Genomic and genetic analyses of diversity and plant interactions of Pseudomonas fluorescens.</title>
        <authorList>
            <person name="Silby M.W."/>
            <person name="Cerdeno-Tarraga A.M."/>
            <person name="Vernikos G.S."/>
            <person name="Giddens S.R."/>
            <person name="Jackson R.W."/>
            <person name="Preston G.M."/>
            <person name="Zhang X.-X."/>
            <person name="Moon C.D."/>
            <person name="Gehrig S.M."/>
            <person name="Godfrey S.A.C."/>
            <person name="Knight C.G."/>
            <person name="Malone J.G."/>
            <person name="Robinson Z."/>
            <person name="Spiers A.J."/>
            <person name="Harris S."/>
            <person name="Challis G.L."/>
            <person name="Yaxley A.M."/>
            <person name="Harris D."/>
            <person name="Seeger K."/>
            <person name="Murphy L."/>
            <person name="Rutter S."/>
            <person name="Squares R."/>
            <person name="Quail M.A."/>
            <person name="Saunders E."/>
            <person name="Mavromatis K."/>
            <person name="Brettin T.S."/>
            <person name="Bentley S.D."/>
            <person name="Hothersall J."/>
            <person name="Stephens E."/>
            <person name="Thomas C.M."/>
            <person name="Parkhill J."/>
            <person name="Levy S.B."/>
            <person name="Rainey P.B."/>
            <person name="Thomson N.R."/>
        </authorList>
    </citation>
    <scope>NUCLEOTIDE SEQUENCE [LARGE SCALE GENOMIC DNA]</scope>
    <source>
        <strain>SBW25</strain>
    </source>
</reference>
<protein>
    <recommendedName>
        <fullName evidence="1">Protein ApaG</fullName>
    </recommendedName>
</protein>
<accession>C3K328</accession>
<evidence type="ECO:0000255" key="1">
    <source>
        <dbReference type="HAMAP-Rule" id="MF_00791"/>
    </source>
</evidence>
<name>APAG_PSEFS</name>